<keyword id="KW-0106">Calcium</keyword>
<keyword id="KW-1015">Disulfide bond</keyword>
<keyword id="KW-0378">Hydrolase</keyword>
<keyword id="KW-0442">Lipid degradation</keyword>
<keyword id="KW-0443">Lipid metabolism</keyword>
<keyword id="KW-0479">Metal-binding</keyword>
<keyword id="KW-0964">Secreted</keyword>
<keyword id="KW-0732">Signal</keyword>
<comment type="function">
    <text evidence="1">PLA2 catalyzes the calcium-dependent hydrolysis of the 2-acyl groups in 3-sn-phosphoglycerides.</text>
</comment>
<comment type="catalytic activity">
    <reaction evidence="3 4">
        <text>a 1,2-diacyl-sn-glycero-3-phosphocholine + H2O = a 1-acyl-sn-glycero-3-phosphocholine + a fatty acid + H(+)</text>
        <dbReference type="Rhea" id="RHEA:15801"/>
        <dbReference type="ChEBI" id="CHEBI:15377"/>
        <dbReference type="ChEBI" id="CHEBI:15378"/>
        <dbReference type="ChEBI" id="CHEBI:28868"/>
        <dbReference type="ChEBI" id="CHEBI:57643"/>
        <dbReference type="ChEBI" id="CHEBI:58168"/>
        <dbReference type="EC" id="3.1.1.4"/>
    </reaction>
</comment>
<comment type="cofactor">
    <cofactor evidence="1">
        <name>Ca(2+)</name>
        <dbReference type="ChEBI" id="CHEBI:29108"/>
    </cofactor>
    <text evidence="1">Binds 1 Ca(2+) ion.</text>
</comment>
<comment type="subcellular location">
    <subcellularLocation>
        <location evidence="1">Secreted</location>
    </subcellularLocation>
</comment>
<comment type="tissue specificity">
    <text>Expressed by the venom gland.</text>
</comment>
<comment type="similarity">
    <text evidence="5">Belongs to the phospholipase A2 family. Group I subfamily. D49 sub-subfamily.</text>
</comment>
<name>PA2A_AIPLA</name>
<evidence type="ECO:0000250" key="1"/>
<evidence type="ECO:0000255" key="2"/>
<evidence type="ECO:0000255" key="3">
    <source>
        <dbReference type="PROSITE-ProRule" id="PRU10035"/>
    </source>
</evidence>
<evidence type="ECO:0000255" key="4">
    <source>
        <dbReference type="PROSITE-ProRule" id="PRU10036"/>
    </source>
</evidence>
<evidence type="ECO:0000305" key="5"/>
<sequence>MYPAHLLVLLAVCVSLLGASDIPPLPLNLYQFDNMIQCANKGKRATWHYMDYGCYCGSGGSGTPVDALDRCCKAHDDCYGVAEDNGCYPKWTLYSWQCTENVPTCNSESGCQKSVCACDATAAKCFAEAPYNNKNYNINTSNCQ</sequence>
<accession>P08872</accession>
<dbReference type="EC" id="3.1.1.4"/>
<dbReference type="EMBL" id="X12604">
    <property type="protein sequence ID" value="CAA31124.1"/>
    <property type="molecule type" value="mRNA"/>
</dbReference>
<dbReference type="PIR" id="S01391">
    <property type="entry name" value="S01391"/>
</dbReference>
<dbReference type="SMR" id="P08872"/>
<dbReference type="GO" id="GO:0005576">
    <property type="term" value="C:extracellular region"/>
    <property type="evidence" value="ECO:0007669"/>
    <property type="project" value="UniProtKB-SubCell"/>
</dbReference>
<dbReference type="GO" id="GO:0005509">
    <property type="term" value="F:calcium ion binding"/>
    <property type="evidence" value="ECO:0007669"/>
    <property type="project" value="InterPro"/>
</dbReference>
<dbReference type="GO" id="GO:0047498">
    <property type="term" value="F:calcium-dependent phospholipase A2 activity"/>
    <property type="evidence" value="ECO:0007669"/>
    <property type="project" value="TreeGrafter"/>
</dbReference>
<dbReference type="GO" id="GO:0005543">
    <property type="term" value="F:phospholipid binding"/>
    <property type="evidence" value="ECO:0007669"/>
    <property type="project" value="TreeGrafter"/>
</dbReference>
<dbReference type="GO" id="GO:0050482">
    <property type="term" value="P:arachidonate secretion"/>
    <property type="evidence" value="ECO:0007669"/>
    <property type="project" value="InterPro"/>
</dbReference>
<dbReference type="GO" id="GO:0016042">
    <property type="term" value="P:lipid catabolic process"/>
    <property type="evidence" value="ECO:0007669"/>
    <property type="project" value="UniProtKB-KW"/>
</dbReference>
<dbReference type="GO" id="GO:0006644">
    <property type="term" value="P:phospholipid metabolic process"/>
    <property type="evidence" value="ECO:0007669"/>
    <property type="project" value="InterPro"/>
</dbReference>
<dbReference type="CDD" id="cd00125">
    <property type="entry name" value="PLA2c"/>
    <property type="match status" value="1"/>
</dbReference>
<dbReference type="FunFam" id="1.20.90.10:FF:000007">
    <property type="entry name" value="Acidic phospholipase A2"/>
    <property type="match status" value="1"/>
</dbReference>
<dbReference type="Gene3D" id="1.20.90.10">
    <property type="entry name" value="Phospholipase A2 domain"/>
    <property type="match status" value="1"/>
</dbReference>
<dbReference type="InterPro" id="IPR001211">
    <property type="entry name" value="PLipase_A2"/>
</dbReference>
<dbReference type="InterPro" id="IPR033112">
    <property type="entry name" value="PLipase_A2_Asp_AS"/>
</dbReference>
<dbReference type="InterPro" id="IPR016090">
    <property type="entry name" value="PLipase_A2_dom"/>
</dbReference>
<dbReference type="InterPro" id="IPR036444">
    <property type="entry name" value="PLipase_A2_dom_sf"/>
</dbReference>
<dbReference type="InterPro" id="IPR033113">
    <property type="entry name" value="PLipase_A2_His_AS"/>
</dbReference>
<dbReference type="PANTHER" id="PTHR11716:SF51">
    <property type="entry name" value="PHOSPHOLIPASE A2"/>
    <property type="match status" value="1"/>
</dbReference>
<dbReference type="PANTHER" id="PTHR11716">
    <property type="entry name" value="PHOSPHOLIPASE A2 FAMILY MEMBER"/>
    <property type="match status" value="1"/>
</dbReference>
<dbReference type="Pfam" id="PF00068">
    <property type="entry name" value="Phospholip_A2_1"/>
    <property type="match status" value="1"/>
</dbReference>
<dbReference type="PRINTS" id="PR00389">
    <property type="entry name" value="PHPHLIPASEA2"/>
</dbReference>
<dbReference type="SMART" id="SM00085">
    <property type="entry name" value="PA2c"/>
    <property type="match status" value="1"/>
</dbReference>
<dbReference type="SUPFAM" id="SSF48619">
    <property type="entry name" value="Phospholipase A2, PLA2"/>
    <property type="match status" value="1"/>
</dbReference>
<dbReference type="PROSITE" id="PS00119">
    <property type="entry name" value="PA2_ASP"/>
    <property type="match status" value="1"/>
</dbReference>
<dbReference type="PROSITE" id="PS00118">
    <property type="entry name" value="PA2_HIS"/>
    <property type="match status" value="1"/>
</dbReference>
<proteinExistence type="evidence at transcript level"/>
<organism>
    <name type="scientific">Aipysurus laevis</name>
    <name type="common">Olive sea snake</name>
    <dbReference type="NCBI Taxonomy" id="8678"/>
    <lineage>
        <taxon>Eukaryota</taxon>
        <taxon>Metazoa</taxon>
        <taxon>Chordata</taxon>
        <taxon>Craniata</taxon>
        <taxon>Vertebrata</taxon>
        <taxon>Euteleostomi</taxon>
        <taxon>Lepidosauria</taxon>
        <taxon>Squamata</taxon>
        <taxon>Bifurcata</taxon>
        <taxon>Unidentata</taxon>
        <taxon>Episquamata</taxon>
        <taxon>Toxicofera</taxon>
        <taxon>Serpentes</taxon>
        <taxon>Colubroidea</taxon>
        <taxon>Elapidae</taxon>
        <taxon>Hydrophiinae</taxon>
        <taxon>Aipysurus</taxon>
    </lineage>
</organism>
<feature type="signal peptide" evidence="2">
    <location>
        <begin position="1"/>
        <end position="19"/>
    </location>
</feature>
<feature type="propeptide" id="PRO_0000022783" evidence="2">
    <location>
        <begin position="20"/>
        <end position="27"/>
    </location>
</feature>
<feature type="chain" id="PRO_0000022784" description="Acidic phospholipase A2">
    <location>
        <begin position="28"/>
        <end position="144"/>
    </location>
</feature>
<feature type="active site" evidence="1">
    <location>
        <position position="75"/>
    </location>
</feature>
<feature type="active site" evidence="1">
    <location>
        <position position="119"/>
    </location>
</feature>
<feature type="binding site" evidence="1">
    <location>
        <position position="55"/>
    </location>
    <ligand>
        <name>Ca(2+)</name>
        <dbReference type="ChEBI" id="CHEBI:29108"/>
    </ligand>
</feature>
<feature type="binding site" evidence="1">
    <location>
        <position position="57"/>
    </location>
    <ligand>
        <name>Ca(2+)</name>
        <dbReference type="ChEBI" id="CHEBI:29108"/>
    </ligand>
</feature>
<feature type="binding site" evidence="1">
    <location>
        <position position="59"/>
    </location>
    <ligand>
        <name>Ca(2+)</name>
        <dbReference type="ChEBI" id="CHEBI:29108"/>
    </ligand>
</feature>
<feature type="binding site" evidence="1">
    <location>
        <position position="76"/>
    </location>
    <ligand>
        <name>Ca(2+)</name>
        <dbReference type="ChEBI" id="CHEBI:29108"/>
    </ligand>
</feature>
<feature type="disulfide bond" evidence="1">
    <location>
        <begin position="38"/>
        <end position="98"/>
    </location>
</feature>
<feature type="disulfide bond" evidence="1">
    <location>
        <begin position="54"/>
        <end position="143"/>
    </location>
</feature>
<feature type="disulfide bond" evidence="1">
    <location>
        <begin position="56"/>
        <end position="72"/>
    </location>
</feature>
<feature type="disulfide bond" evidence="1">
    <location>
        <begin position="71"/>
        <end position="125"/>
    </location>
</feature>
<feature type="disulfide bond" evidence="1">
    <location>
        <begin position="78"/>
        <end position="118"/>
    </location>
</feature>
<feature type="disulfide bond" evidence="1">
    <location>
        <begin position="87"/>
        <end position="111"/>
    </location>
</feature>
<feature type="disulfide bond" evidence="1">
    <location>
        <begin position="105"/>
        <end position="116"/>
    </location>
</feature>
<reference key="1">
    <citation type="journal article" date="1988" name="Nucleic Acids Res.">
        <title>Sequence analysis of a cDNA encoding a PLA2 from the sea-snake Aipysurus laevis.</title>
        <authorList>
            <person name="Ducancel F."/>
            <person name="Guignery Frelat G."/>
            <person name="Bouchier C."/>
            <person name="Menez A."/>
            <person name="Boulain J.-C."/>
        </authorList>
    </citation>
    <scope>NUCLEOTIDE SEQUENCE [MRNA]</scope>
    <source>
        <tissue>Venom gland</tissue>
    </source>
</reference>
<protein>
    <recommendedName>
        <fullName>Acidic phospholipase A2</fullName>
        <shortName>svPLA2</shortName>
        <ecNumber>3.1.1.4</ecNumber>
    </recommendedName>
    <alternativeName>
        <fullName>Phosphatidylcholine 2-acylhydrolase</fullName>
    </alternativeName>
</protein>